<protein>
    <recommendedName>
        <fullName evidence="2">Small COPII coat GTPase SAR1B</fullName>
        <ecNumber evidence="2">3.6.5.2</ecNumber>
    </recommendedName>
    <alternativeName>
        <fullName>GTP-binding protein SAR1B</fullName>
    </alternativeName>
</protein>
<name>SAR1B_ARATH</name>
<sequence length="193" mass="21986">MFLFDWFYGILASLGLWQKEAKILFLGLDNAGKTTLLHMLKDERLVQHQPTQHPTSEELSIGKIKFKAFDLGGHQIARRVWKDYYAKVDAVVYLVDAYDKERFAESKRELDALLSDEALATVPFLILGNKIDIPYAASEDELRYHLGLTNFTTGKGKVTLGDSGVRPLEVFMCSIVRKMGYGEGFKWLSQYIN</sequence>
<comment type="function">
    <text evidence="2">Small GTPase that cycles between an active GTP-bound and an inactive GDP-bound state and mainly functions in vesicle-mediated endoplasmic reticulum (ER) to Golgi transport. The active GTP-bound form inserts into the endoplasmic reticulum membrane where it recruits the remainder of the coat protein complex II/COPII. The coat protein complex II assembling and polymerizing on endoplasmic reticulum membrane is responsible for both the sorting of cargos and the deformation and budding of membranes into vesicles destined to the Golgi.</text>
</comment>
<comment type="catalytic activity">
    <reaction evidence="2">
        <text>GTP + H2O = GDP + phosphate + H(+)</text>
        <dbReference type="Rhea" id="RHEA:19669"/>
        <dbReference type="ChEBI" id="CHEBI:15377"/>
        <dbReference type="ChEBI" id="CHEBI:15378"/>
        <dbReference type="ChEBI" id="CHEBI:37565"/>
        <dbReference type="ChEBI" id="CHEBI:43474"/>
        <dbReference type="ChEBI" id="CHEBI:58189"/>
        <dbReference type="EC" id="3.6.5.2"/>
    </reaction>
    <physiologicalReaction direction="left-to-right" evidence="2">
        <dbReference type="Rhea" id="RHEA:19670"/>
    </physiologicalReaction>
</comment>
<comment type="activity regulation">
    <text evidence="1">Small GTPases activation is mediated by guanine exchange factors (GEF), while inactivation through hydrolysis of the bound GTP is stimulated by GTPase activating proteins (GAP).</text>
</comment>
<comment type="subunit">
    <text evidence="2 3">Homodimer; upon association with membrane. Part of the coat protein complex II/COPII, composed of SEC23/24 and SEC13/31 heterodimers, that it helps recruit and assemble on endoplasmic reticulum (ER) membranes at ER exit site (By similarity). Interacts with BZIP28 (PubMed:22335396).</text>
</comment>
<comment type="subcellular location">
    <subcellularLocation>
        <location evidence="2">Endoplasmic reticulum membrane</location>
        <topology evidence="1">Peripheral membrane protein</topology>
    </subcellularLocation>
    <subcellularLocation>
        <location evidence="1">Golgi apparatus</location>
        <location evidence="1">Golgi stack membrane</location>
        <topology evidence="1">Peripheral membrane protein</topology>
    </subcellularLocation>
    <text evidence="2">Active at endoplasmic reticulum exit sites (ERES) where it inserts into the membrane and recruits the remainder of the coat protein complex II/COPII.</text>
</comment>
<comment type="similarity">
    <text evidence="4">Belongs to the small GTPase superfamily. SAR1 family.</text>
</comment>
<accession>Q01474</accession>
<feature type="chain" id="PRO_0000206266" description="Small COPII coat GTPase SAR1B">
    <location>
        <begin position="1"/>
        <end position="193"/>
    </location>
</feature>
<feature type="region of interest" description="Mediates recruitment to ER membranes" evidence="1">
    <location>
        <begin position="10"/>
        <end position="14"/>
    </location>
</feature>
<feature type="short sequence motif" description="STAR; SAR1-N-terminal activation recruitment. Required for the activation and subsequent recruitment to ER membrane" evidence="1">
    <location>
        <begin position="2"/>
        <end position="4"/>
    </location>
</feature>
<feature type="binding site" evidence="2">
    <location>
        <position position="29"/>
    </location>
    <ligand>
        <name>Mg(2+)</name>
        <dbReference type="ChEBI" id="CHEBI:18420"/>
    </ligand>
</feature>
<feature type="binding site" evidence="2">
    <location>
        <position position="30"/>
    </location>
    <ligand>
        <name>GDP</name>
        <dbReference type="ChEBI" id="CHEBI:58189"/>
    </ligand>
</feature>
<feature type="binding site" evidence="2">
    <location>
        <position position="30"/>
    </location>
    <ligand>
        <name>GTP</name>
        <dbReference type="ChEBI" id="CHEBI:37565"/>
    </ligand>
</feature>
<feature type="binding site" evidence="2">
    <location>
        <position position="31"/>
    </location>
    <ligand>
        <name>GDP</name>
        <dbReference type="ChEBI" id="CHEBI:58189"/>
    </ligand>
</feature>
<feature type="binding site" evidence="2">
    <location>
        <position position="32"/>
    </location>
    <ligand>
        <name>GDP</name>
        <dbReference type="ChEBI" id="CHEBI:58189"/>
    </ligand>
</feature>
<feature type="binding site" evidence="2">
    <location>
        <position position="32"/>
    </location>
    <ligand>
        <name>GTP</name>
        <dbReference type="ChEBI" id="CHEBI:37565"/>
    </ligand>
</feature>
<feature type="binding site" evidence="2">
    <location>
        <position position="33"/>
    </location>
    <ligand>
        <name>GDP</name>
        <dbReference type="ChEBI" id="CHEBI:58189"/>
    </ligand>
</feature>
<feature type="binding site" evidence="2">
    <location>
        <position position="33"/>
    </location>
    <ligand>
        <name>GTP</name>
        <dbReference type="ChEBI" id="CHEBI:37565"/>
    </ligand>
</feature>
<feature type="binding site" evidence="2">
    <location>
        <position position="34"/>
    </location>
    <ligand>
        <name>GDP</name>
        <dbReference type="ChEBI" id="CHEBI:58189"/>
    </ligand>
</feature>
<feature type="binding site" evidence="2">
    <location>
        <position position="34"/>
    </location>
    <ligand>
        <name>GTP</name>
        <dbReference type="ChEBI" id="CHEBI:37565"/>
    </ligand>
</feature>
<feature type="binding site" evidence="2">
    <location>
        <position position="35"/>
    </location>
    <ligand>
        <name>GDP</name>
        <dbReference type="ChEBI" id="CHEBI:58189"/>
    </ligand>
</feature>
<feature type="binding site" evidence="2">
    <location>
        <position position="35"/>
    </location>
    <ligand>
        <name>GTP</name>
        <dbReference type="ChEBI" id="CHEBI:37565"/>
    </ligand>
</feature>
<feature type="binding site" evidence="2">
    <location>
        <position position="53"/>
    </location>
    <ligand>
        <name>GDP</name>
        <dbReference type="ChEBI" id="CHEBI:58189"/>
    </ligand>
</feature>
<feature type="binding site" evidence="2">
    <location>
        <position position="70"/>
    </location>
    <ligand>
        <name>Mg(2+)</name>
        <dbReference type="ChEBI" id="CHEBI:18420"/>
    </ligand>
</feature>
<feature type="binding site" evidence="2">
    <location>
        <position position="129"/>
    </location>
    <ligand>
        <name>GDP</name>
        <dbReference type="ChEBI" id="CHEBI:58189"/>
    </ligand>
</feature>
<feature type="binding site" evidence="2">
    <location>
        <position position="129"/>
    </location>
    <ligand>
        <name>GTP</name>
        <dbReference type="ChEBI" id="CHEBI:37565"/>
    </ligand>
</feature>
<feature type="binding site" evidence="2">
    <location>
        <position position="130"/>
    </location>
    <ligand>
        <name>GDP</name>
        <dbReference type="ChEBI" id="CHEBI:58189"/>
    </ligand>
</feature>
<feature type="binding site" evidence="2">
    <location>
        <position position="130"/>
    </location>
    <ligand>
        <name>GTP</name>
        <dbReference type="ChEBI" id="CHEBI:37565"/>
    </ligand>
</feature>
<feature type="binding site" evidence="2">
    <location>
        <position position="132"/>
    </location>
    <ligand>
        <name>GDP</name>
        <dbReference type="ChEBI" id="CHEBI:58189"/>
    </ligand>
</feature>
<feature type="binding site" evidence="2">
    <location>
        <position position="132"/>
    </location>
    <ligand>
        <name>GTP</name>
        <dbReference type="ChEBI" id="CHEBI:37565"/>
    </ligand>
</feature>
<feature type="binding site" evidence="2">
    <location>
        <position position="175"/>
    </location>
    <ligand>
        <name>GDP</name>
        <dbReference type="ChEBI" id="CHEBI:58189"/>
    </ligand>
</feature>
<feature type="binding site" evidence="2">
    <location>
        <position position="175"/>
    </location>
    <ligand>
        <name>GTP</name>
        <dbReference type="ChEBI" id="CHEBI:37565"/>
    </ligand>
</feature>
<evidence type="ECO:0000250" key="1">
    <source>
        <dbReference type="UniProtKB" id="Q9QVY3"/>
    </source>
</evidence>
<evidence type="ECO:0000250" key="2">
    <source>
        <dbReference type="UniProtKB" id="Q9Y6B6"/>
    </source>
</evidence>
<evidence type="ECO:0000269" key="3">
    <source>
    </source>
</evidence>
<evidence type="ECO:0000305" key="4"/>
<keyword id="KW-0256">Endoplasmic reticulum</keyword>
<keyword id="KW-0931">ER-Golgi transport</keyword>
<keyword id="KW-0333">Golgi apparatus</keyword>
<keyword id="KW-0342">GTP-binding</keyword>
<keyword id="KW-0378">Hydrolase</keyword>
<keyword id="KW-0460">Magnesium</keyword>
<keyword id="KW-0472">Membrane</keyword>
<keyword id="KW-0479">Metal-binding</keyword>
<keyword id="KW-0547">Nucleotide-binding</keyword>
<keyword id="KW-0653">Protein transport</keyword>
<keyword id="KW-1185">Reference proteome</keyword>
<keyword id="KW-0813">Transport</keyword>
<gene>
    <name type="primary">SAR1B</name>
    <name type="synonym">SAR1</name>
    <name type="ordered locus">At1g56330</name>
    <name type="ORF">F14G9.6</name>
</gene>
<dbReference type="EC" id="3.6.5.2" evidence="2"/>
<dbReference type="EMBL" id="M95795">
    <property type="protein sequence ID" value="AAA32807.1"/>
    <property type="molecule type" value="mRNA"/>
</dbReference>
<dbReference type="EMBL" id="AC069159">
    <property type="protein sequence ID" value="AAG50911.1"/>
    <property type="molecule type" value="Genomic_DNA"/>
</dbReference>
<dbReference type="EMBL" id="CP002684">
    <property type="protein sequence ID" value="AEE33378.1"/>
    <property type="molecule type" value="Genomic_DNA"/>
</dbReference>
<dbReference type="EMBL" id="AY072220">
    <property type="protein sequence ID" value="AAL60041.1"/>
    <property type="molecule type" value="mRNA"/>
</dbReference>
<dbReference type="EMBL" id="AY096599">
    <property type="protein sequence ID" value="AAM20249.1"/>
    <property type="molecule type" value="mRNA"/>
</dbReference>
<dbReference type="EMBL" id="AY085815">
    <property type="protein sequence ID" value="AAM63031.1"/>
    <property type="molecule type" value="mRNA"/>
</dbReference>
<dbReference type="PIR" id="S28603">
    <property type="entry name" value="S28603"/>
</dbReference>
<dbReference type="RefSeq" id="NP_176029.1">
    <property type="nucleotide sequence ID" value="NM_104512.3"/>
</dbReference>
<dbReference type="SMR" id="Q01474"/>
<dbReference type="BioGRID" id="27311">
    <property type="interactions" value="21"/>
</dbReference>
<dbReference type="FunCoup" id="Q01474">
    <property type="interactions" value="3795"/>
</dbReference>
<dbReference type="IntAct" id="Q01474">
    <property type="interactions" value="18"/>
</dbReference>
<dbReference type="STRING" id="3702.Q01474"/>
<dbReference type="iPTMnet" id="Q01474"/>
<dbReference type="PaxDb" id="3702-AT1G56330.1"/>
<dbReference type="ProteomicsDB" id="226584"/>
<dbReference type="EnsemblPlants" id="AT1G56330.1">
    <property type="protein sequence ID" value="AT1G56330.1"/>
    <property type="gene ID" value="AT1G56330"/>
</dbReference>
<dbReference type="GeneID" id="842086"/>
<dbReference type="Gramene" id="AT1G56330.1">
    <property type="protein sequence ID" value="AT1G56330.1"/>
    <property type="gene ID" value="AT1G56330"/>
</dbReference>
<dbReference type="KEGG" id="ath:AT1G56330"/>
<dbReference type="Araport" id="AT1G56330"/>
<dbReference type="TAIR" id="AT1G56330">
    <property type="gene designation" value="SAR1B"/>
</dbReference>
<dbReference type="eggNOG" id="KOG0077">
    <property type="taxonomic scope" value="Eukaryota"/>
</dbReference>
<dbReference type="HOGENOM" id="CLU_040729_6_0_1"/>
<dbReference type="InParanoid" id="Q01474"/>
<dbReference type="OMA" id="DWLYNGF"/>
<dbReference type="OrthoDB" id="1569915at2759"/>
<dbReference type="PhylomeDB" id="Q01474"/>
<dbReference type="PRO" id="PR:Q01474"/>
<dbReference type="Proteomes" id="UP000006548">
    <property type="component" value="Chromosome 1"/>
</dbReference>
<dbReference type="ExpressionAtlas" id="Q01474">
    <property type="expression patterns" value="baseline and differential"/>
</dbReference>
<dbReference type="GO" id="GO:0005829">
    <property type="term" value="C:cytosol"/>
    <property type="evidence" value="ECO:0000314"/>
    <property type="project" value="TAIR"/>
</dbReference>
<dbReference type="GO" id="GO:0005783">
    <property type="term" value="C:endoplasmic reticulum"/>
    <property type="evidence" value="ECO:0000314"/>
    <property type="project" value="TAIR"/>
</dbReference>
<dbReference type="GO" id="GO:0005789">
    <property type="term" value="C:endoplasmic reticulum membrane"/>
    <property type="evidence" value="ECO:0007669"/>
    <property type="project" value="UniProtKB-SubCell"/>
</dbReference>
<dbReference type="GO" id="GO:0019898">
    <property type="term" value="C:extrinsic component of membrane"/>
    <property type="evidence" value="ECO:0000314"/>
    <property type="project" value="TAIR"/>
</dbReference>
<dbReference type="GO" id="GO:0032580">
    <property type="term" value="C:Golgi cisterna membrane"/>
    <property type="evidence" value="ECO:0007669"/>
    <property type="project" value="UniProtKB-SubCell"/>
</dbReference>
<dbReference type="GO" id="GO:0005886">
    <property type="term" value="C:plasma membrane"/>
    <property type="evidence" value="ECO:0007005"/>
    <property type="project" value="TAIR"/>
</dbReference>
<dbReference type="GO" id="GO:0005525">
    <property type="term" value="F:GTP binding"/>
    <property type="evidence" value="ECO:0000250"/>
    <property type="project" value="TAIR"/>
</dbReference>
<dbReference type="GO" id="GO:0003924">
    <property type="term" value="F:GTPase activity"/>
    <property type="evidence" value="ECO:0007669"/>
    <property type="project" value="InterPro"/>
</dbReference>
<dbReference type="GO" id="GO:0046872">
    <property type="term" value="F:metal ion binding"/>
    <property type="evidence" value="ECO:0007669"/>
    <property type="project" value="UniProtKB-KW"/>
</dbReference>
<dbReference type="GO" id="GO:0006888">
    <property type="term" value="P:endoplasmic reticulum to Golgi vesicle-mediated transport"/>
    <property type="evidence" value="ECO:0000304"/>
    <property type="project" value="TAIR"/>
</dbReference>
<dbReference type="GO" id="GO:0006886">
    <property type="term" value="P:intracellular protein transport"/>
    <property type="evidence" value="ECO:0007669"/>
    <property type="project" value="InterPro"/>
</dbReference>
<dbReference type="CDD" id="cd00879">
    <property type="entry name" value="Sar1"/>
    <property type="match status" value="1"/>
</dbReference>
<dbReference type="FunFam" id="3.40.50.300:FF:000261">
    <property type="entry name" value="GTP-binding protein SAR1A"/>
    <property type="match status" value="1"/>
</dbReference>
<dbReference type="Gene3D" id="3.40.50.300">
    <property type="entry name" value="P-loop containing nucleotide triphosphate hydrolases"/>
    <property type="match status" value="1"/>
</dbReference>
<dbReference type="InterPro" id="IPR027417">
    <property type="entry name" value="P-loop_NTPase"/>
</dbReference>
<dbReference type="InterPro" id="IPR005225">
    <property type="entry name" value="Small_GTP-bd"/>
</dbReference>
<dbReference type="InterPro" id="IPR006689">
    <property type="entry name" value="Small_GTPase_ARF/SAR"/>
</dbReference>
<dbReference type="InterPro" id="IPR006687">
    <property type="entry name" value="Small_GTPase_SAR1"/>
</dbReference>
<dbReference type="NCBIfam" id="TIGR00231">
    <property type="entry name" value="small_GTP"/>
    <property type="match status" value="1"/>
</dbReference>
<dbReference type="PANTHER" id="PTHR45684">
    <property type="entry name" value="RE74312P"/>
    <property type="match status" value="1"/>
</dbReference>
<dbReference type="Pfam" id="PF00025">
    <property type="entry name" value="Arf"/>
    <property type="match status" value="1"/>
</dbReference>
<dbReference type="PRINTS" id="PR00328">
    <property type="entry name" value="SAR1GTPBP"/>
</dbReference>
<dbReference type="SMART" id="SM00177">
    <property type="entry name" value="ARF"/>
    <property type="match status" value="1"/>
</dbReference>
<dbReference type="SMART" id="SM00178">
    <property type="entry name" value="SAR"/>
    <property type="match status" value="1"/>
</dbReference>
<dbReference type="SUPFAM" id="SSF52540">
    <property type="entry name" value="P-loop containing nucleoside triphosphate hydrolases"/>
    <property type="match status" value="1"/>
</dbReference>
<dbReference type="PROSITE" id="PS51422">
    <property type="entry name" value="SAR1"/>
    <property type="match status" value="1"/>
</dbReference>
<organism>
    <name type="scientific">Arabidopsis thaliana</name>
    <name type="common">Mouse-ear cress</name>
    <dbReference type="NCBI Taxonomy" id="3702"/>
    <lineage>
        <taxon>Eukaryota</taxon>
        <taxon>Viridiplantae</taxon>
        <taxon>Streptophyta</taxon>
        <taxon>Embryophyta</taxon>
        <taxon>Tracheophyta</taxon>
        <taxon>Spermatophyta</taxon>
        <taxon>Magnoliopsida</taxon>
        <taxon>eudicotyledons</taxon>
        <taxon>Gunneridae</taxon>
        <taxon>Pentapetalae</taxon>
        <taxon>rosids</taxon>
        <taxon>malvids</taxon>
        <taxon>Brassicales</taxon>
        <taxon>Brassicaceae</taxon>
        <taxon>Camelineae</taxon>
        <taxon>Arabidopsis</taxon>
    </lineage>
</organism>
<proteinExistence type="evidence at protein level"/>
<reference key="1">
    <citation type="journal article" date="1992" name="EMBO J.">
        <title>Fission yeast and a plant have functional homologues of the Sar1 and Sec12 proteins involved in ER to Golgi traffic in budding yeast.</title>
        <authorList>
            <person name="d'Enfert C."/>
            <person name="Gensse M."/>
            <person name="Gaillardin C."/>
        </authorList>
    </citation>
    <scope>NUCLEOTIDE SEQUENCE [MRNA]</scope>
</reference>
<reference key="2">
    <citation type="journal article" date="2000" name="Nature">
        <title>Sequence and analysis of chromosome 1 of the plant Arabidopsis thaliana.</title>
        <authorList>
            <person name="Theologis A."/>
            <person name="Ecker J.R."/>
            <person name="Palm C.J."/>
            <person name="Federspiel N.A."/>
            <person name="Kaul S."/>
            <person name="White O."/>
            <person name="Alonso J."/>
            <person name="Altafi H."/>
            <person name="Araujo R."/>
            <person name="Bowman C.L."/>
            <person name="Brooks S.Y."/>
            <person name="Buehler E."/>
            <person name="Chan A."/>
            <person name="Chao Q."/>
            <person name="Chen H."/>
            <person name="Cheuk R.F."/>
            <person name="Chin C.W."/>
            <person name="Chung M.K."/>
            <person name="Conn L."/>
            <person name="Conway A.B."/>
            <person name="Conway A.R."/>
            <person name="Creasy T.H."/>
            <person name="Dewar K."/>
            <person name="Dunn P."/>
            <person name="Etgu P."/>
            <person name="Feldblyum T.V."/>
            <person name="Feng J.-D."/>
            <person name="Fong B."/>
            <person name="Fujii C.Y."/>
            <person name="Gill J.E."/>
            <person name="Goldsmith A.D."/>
            <person name="Haas B."/>
            <person name="Hansen N.F."/>
            <person name="Hughes B."/>
            <person name="Huizar L."/>
            <person name="Hunter J.L."/>
            <person name="Jenkins J."/>
            <person name="Johnson-Hopson C."/>
            <person name="Khan S."/>
            <person name="Khaykin E."/>
            <person name="Kim C.J."/>
            <person name="Koo H.L."/>
            <person name="Kremenetskaia I."/>
            <person name="Kurtz D.B."/>
            <person name="Kwan A."/>
            <person name="Lam B."/>
            <person name="Langin-Hooper S."/>
            <person name="Lee A."/>
            <person name="Lee J.M."/>
            <person name="Lenz C.A."/>
            <person name="Li J.H."/>
            <person name="Li Y.-P."/>
            <person name="Lin X."/>
            <person name="Liu S.X."/>
            <person name="Liu Z.A."/>
            <person name="Luros J.S."/>
            <person name="Maiti R."/>
            <person name="Marziali A."/>
            <person name="Militscher J."/>
            <person name="Miranda M."/>
            <person name="Nguyen M."/>
            <person name="Nierman W.C."/>
            <person name="Osborne B.I."/>
            <person name="Pai G."/>
            <person name="Peterson J."/>
            <person name="Pham P.K."/>
            <person name="Rizzo M."/>
            <person name="Rooney T."/>
            <person name="Rowley D."/>
            <person name="Sakano H."/>
            <person name="Salzberg S.L."/>
            <person name="Schwartz J.R."/>
            <person name="Shinn P."/>
            <person name="Southwick A.M."/>
            <person name="Sun H."/>
            <person name="Tallon L.J."/>
            <person name="Tambunga G."/>
            <person name="Toriumi M.J."/>
            <person name="Town C.D."/>
            <person name="Utterback T."/>
            <person name="Van Aken S."/>
            <person name="Vaysberg M."/>
            <person name="Vysotskaia V.S."/>
            <person name="Walker M."/>
            <person name="Wu D."/>
            <person name="Yu G."/>
            <person name="Fraser C.M."/>
            <person name="Venter J.C."/>
            <person name="Davis R.W."/>
        </authorList>
    </citation>
    <scope>NUCLEOTIDE SEQUENCE [LARGE SCALE GENOMIC DNA]</scope>
    <source>
        <strain>cv. Columbia</strain>
    </source>
</reference>
<reference key="3">
    <citation type="journal article" date="2017" name="Plant J.">
        <title>Araport11: a complete reannotation of the Arabidopsis thaliana reference genome.</title>
        <authorList>
            <person name="Cheng C.Y."/>
            <person name="Krishnakumar V."/>
            <person name="Chan A.P."/>
            <person name="Thibaud-Nissen F."/>
            <person name="Schobel S."/>
            <person name="Town C.D."/>
        </authorList>
    </citation>
    <scope>GENOME REANNOTATION</scope>
    <source>
        <strain>cv. Columbia</strain>
    </source>
</reference>
<reference key="4">
    <citation type="journal article" date="2003" name="Science">
        <title>Empirical analysis of transcriptional activity in the Arabidopsis genome.</title>
        <authorList>
            <person name="Yamada K."/>
            <person name="Lim J."/>
            <person name="Dale J.M."/>
            <person name="Chen H."/>
            <person name="Shinn P."/>
            <person name="Palm C.J."/>
            <person name="Southwick A.M."/>
            <person name="Wu H.C."/>
            <person name="Kim C.J."/>
            <person name="Nguyen M."/>
            <person name="Pham P.K."/>
            <person name="Cheuk R.F."/>
            <person name="Karlin-Newmann G."/>
            <person name="Liu S.X."/>
            <person name="Lam B."/>
            <person name="Sakano H."/>
            <person name="Wu T."/>
            <person name="Yu G."/>
            <person name="Miranda M."/>
            <person name="Quach H.L."/>
            <person name="Tripp M."/>
            <person name="Chang C.H."/>
            <person name="Lee J.M."/>
            <person name="Toriumi M.J."/>
            <person name="Chan M.M."/>
            <person name="Tang C.C."/>
            <person name="Onodera C.S."/>
            <person name="Deng J.M."/>
            <person name="Akiyama K."/>
            <person name="Ansari Y."/>
            <person name="Arakawa T."/>
            <person name="Banh J."/>
            <person name="Banno F."/>
            <person name="Bowser L."/>
            <person name="Brooks S.Y."/>
            <person name="Carninci P."/>
            <person name="Chao Q."/>
            <person name="Choy N."/>
            <person name="Enju A."/>
            <person name="Goldsmith A.D."/>
            <person name="Gurjal M."/>
            <person name="Hansen N.F."/>
            <person name="Hayashizaki Y."/>
            <person name="Johnson-Hopson C."/>
            <person name="Hsuan V.W."/>
            <person name="Iida K."/>
            <person name="Karnes M."/>
            <person name="Khan S."/>
            <person name="Koesema E."/>
            <person name="Ishida J."/>
            <person name="Jiang P.X."/>
            <person name="Jones T."/>
            <person name="Kawai J."/>
            <person name="Kamiya A."/>
            <person name="Meyers C."/>
            <person name="Nakajima M."/>
            <person name="Narusaka M."/>
            <person name="Seki M."/>
            <person name="Sakurai T."/>
            <person name="Satou M."/>
            <person name="Tamse R."/>
            <person name="Vaysberg M."/>
            <person name="Wallender E.K."/>
            <person name="Wong C."/>
            <person name="Yamamura Y."/>
            <person name="Yuan S."/>
            <person name="Shinozaki K."/>
            <person name="Davis R.W."/>
            <person name="Theologis A."/>
            <person name="Ecker J.R."/>
        </authorList>
    </citation>
    <scope>NUCLEOTIDE SEQUENCE [LARGE SCALE MRNA]</scope>
    <source>
        <strain>cv. Columbia</strain>
    </source>
</reference>
<reference key="5">
    <citation type="submission" date="2002-03" db="EMBL/GenBank/DDBJ databases">
        <title>Full-length cDNA from Arabidopsis thaliana.</title>
        <authorList>
            <person name="Brover V.V."/>
            <person name="Troukhan M.E."/>
            <person name="Alexandrov N.A."/>
            <person name="Lu Y.-P."/>
            <person name="Flavell R.B."/>
            <person name="Feldmann K.A."/>
        </authorList>
    </citation>
    <scope>NUCLEOTIDE SEQUENCE [LARGE SCALE MRNA]</scope>
</reference>
<reference key="6">
    <citation type="journal article" date="2012" name="Plant J.">
        <title>Elements proximal to and within the transmembrane domain mediate the organelle-to-organelle movement of bZIP28 under ER stress conditions.</title>
        <authorList>
            <person name="Srivastava R."/>
            <person name="Chen Y."/>
            <person name="Deng Y."/>
            <person name="Brandizzi F."/>
            <person name="Howell S.H."/>
        </authorList>
    </citation>
    <scope>INTERACTION WITH BZIP28</scope>
</reference>